<comment type="function">
    <text evidence="1">Functions as a chaperone during endoplasmic reticulum (ER) stress response.</text>
</comment>
<comment type="subunit">
    <text evidence="6">Interacts with ERDJ3A.</text>
</comment>
<comment type="subcellular location">
    <subcellularLocation>
        <location evidence="3">Endoplasmic reticulum</location>
    </subcellularLocation>
</comment>
<comment type="induction">
    <text evidence="5 6">By dithiothreitol-induced endoplasmic reticulum (ER) stress response (PubMed:22050533, PubMed:24153418). Induced by tunicamycin-induced ER stress response (PubMed:24153418).</text>
</comment>
<comment type="similarity">
    <text evidence="8">Belongs to the heat shock protein 70 family.</text>
</comment>
<comment type="sequence caution" evidence="8">
    <conflict type="erroneous initiation">
        <sequence resource="EMBL-CDS" id="BAT04227"/>
    </conflict>
    <text>Extended N-terminus.</text>
</comment>
<feature type="signal peptide" evidence="2">
    <location>
        <begin position="1"/>
        <end position="27"/>
    </location>
</feature>
<feature type="chain" id="PRO_5007709809" description="Heat shock 70 kDa protein BIP5">
    <location>
        <begin position="28"/>
        <end position="676"/>
    </location>
</feature>
<feature type="region of interest" description="Disordered" evidence="4">
    <location>
        <begin position="650"/>
        <end position="676"/>
    </location>
</feature>
<feature type="short sequence motif" description="Prevents secretion from ER" evidence="3">
    <location>
        <begin position="673"/>
        <end position="676"/>
    </location>
</feature>
<feature type="compositionally biased region" description="Acidic residues" evidence="4">
    <location>
        <begin position="665"/>
        <end position="676"/>
    </location>
</feature>
<gene>
    <name evidence="7" type="primary">BIP5</name>
    <name evidence="10" type="ordered locus">Os08g0197700</name>
    <name evidence="8" type="ordered locus">LOC_Os08g09770</name>
    <name evidence="9" type="ORF">P0412D08.27</name>
</gene>
<protein>
    <recommendedName>
        <fullName evidence="8">Heat shock 70 kDa protein BIP5</fullName>
    </recommendedName>
    <alternativeName>
        <fullName evidence="8">Luminal-binding protein 5</fullName>
        <shortName evidence="7">OsBiP5</shortName>
    </alternativeName>
</protein>
<sequence length="676" mass="73504">MARPRRASTMQLGLFLAALLLLTPSPAGSVAAAKGGGAKSGGGGTVIGIDLGTTYSCVGVYRNGHVEIIANDQGNRITPSWVAFTDGGERLIGEAAKNQAAANPERTIYDAKRLIGRQFSDAEVQRDMKLLPFAVVDRNGKPHVRVEVKDGDVRVFSPEEVSAMVLTRMKETAEAYLGEKVTRAVVTVPAYFNDAQRQATKDAGVIAGLTVDRIINEPTAAAIAYGIDKKGAEKNVLVFDLGGGTFDVSILAIDNGVFEVLATNGDTHLGGEDFDQRLMDHFVKVIRRKHGRDITGDARALGKLRRECERAKRALSNQHQVRVEVESLFDGVDLSEPLSRARFEELNSDLFKKTMVPVRKAMADARLSKGDIDEIVLVGGSTRIPKVQQLLKDYFGGKEPNRGVNPDEAVAYGAAVQASIISGHVDENTESMILLDVAPLTLGLETAGGVMAKLIPRNTVVPTKKTQVFTTYKDKQTTVTIQVFEGERSMTRDNRLLGRFDLAGIAPAPRGAPQIEVTFEVDANGILSVLAADKATGRSEKITISGDDRKISQEEIDRMVREAEEFAEEDRRHREQVDARNSLEAYVYNIKNTLGGKMADAMEGEEKDKVEEAVREAYEWLDGNPDAGKEEYEEKLRELEDVCNPVMSAVYQRSGGGGGGAPEDGNVDDEDDHDEL</sequence>
<accession>Q6Z058</accession>
<accession>A0A0P0XCZ2</accession>
<proteinExistence type="evidence at protein level"/>
<organism>
    <name type="scientific">Oryza sativa subsp. japonica</name>
    <name type="common">Rice</name>
    <dbReference type="NCBI Taxonomy" id="39947"/>
    <lineage>
        <taxon>Eukaryota</taxon>
        <taxon>Viridiplantae</taxon>
        <taxon>Streptophyta</taxon>
        <taxon>Embryophyta</taxon>
        <taxon>Tracheophyta</taxon>
        <taxon>Spermatophyta</taxon>
        <taxon>Magnoliopsida</taxon>
        <taxon>Liliopsida</taxon>
        <taxon>Poales</taxon>
        <taxon>Poaceae</taxon>
        <taxon>BOP clade</taxon>
        <taxon>Oryzoideae</taxon>
        <taxon>Oryzeae</taxon>
        <taxon>Oryzinae</taxon>
        <taxon>Oryza</taxon>
        <taxon>Oryza sativa</taxon>
    </lineage>
</organism>
<evidence type="ECO:0000250" key="1">
    <source>
        <dbReference type="UniProtKB" id="Q6Z7B0"/>
    </source>
</evidence>
<evidence type="ECO:0000255" key="2"/>
<evidence type="ECO:0000255" key="3">
    <source>
        <dbReference type="PROSITE-ProRule" id="PRU10138"/>
    </source>
</evidence>
<evidence type="ECO:0000256" key="4">
    <source>
        <dbReference type="SAM" id="MobiDB-lite"/>
    </source>
</evidence>
<evidence type="ECO:0000269" key="5">
    <source>
    </source>
</evidence>
<evidence type="ECO:0000269" key="6">
    <source>
    </source>
</evidence>
<evidence type="ECO:0000303" key="7">
    <source>
    </source>
</evidence>
<evidence type="ECO:0000305" key="8"/>
<evidence type="ECO:0000312" key="9">
    <source>
        <dbReference type="EMBL" id="BAD03698.1"/>
    </source>
</evidence>
<evidence type="ECO:0000312" key="10">
    <source>
        <dbReference type="EMBL" id="BAF23108.1"/>
    </source>
</evidence>
<keyword id="KW-0067">ATP-binding</keyword>
<keyword id="KW-0143">Chaperone</keyword>
<keyword id="KW-0256">Endoplasmic reticulum</keyword>
<keyword id="KW-0547">Nucleotide-binding</keyword>
<keyword id="KW-1185">Reference proteome</keyword>
<keyword id="KW-0732">Signal</keyword>
<keyword id="KW-0346">Stress response</keyword>
<name>BIP5_ORYSJ</name>
<reference key="1">
    <citation type="journal article" date="2005" name="Nature">
        <title>The map-based sequence of the rice genome.</title>
        <authorList>
            <consortium name="International rice genome sequencing project (IRGSP)"/>
        </authorList>
    </citation>
    <scope>NUCLEOTIDE SEQUENCE [LARGE SCALE GENOMIC DNA]</scope>
    <source>
        <strain>cv. Nipponbare</strain>
    </source>
</reference>
<reference key="2">
    <citation type="journal article" date="2008" name="Nucleic Acids Res.">
        <title>The rice annotation project database (RAP-DB): 2008 update.</title>
        <authorList>
            <consortium name="The rice annotation project (RAP)"/>
        </authorList>
    </citation>
    <scope>GENOME REANNOTATION</scope>
    <source>
        <strain>cv. Nipponbare</strain>
    </source>
</reference>
<reference key="3">
    <citation type="journal article" date="2013" name="Rice">
        <title>Improvement of the Oryza sativa Nipponbare reference genome using next generation sequence and optical map data.</title>
        <authorList>
            <person name="Kawahara Y."/>
            <person name="de la Bastide M."/>
            <person name="Hamilton J.P."/>
            <person name="Kanamori H."/>
            <person name="McCombie W.R."/>
            <person name="Ouyang S."/>
            <person name="Schwartz D.C."/>
            <person name="Tanaka T."/>
            <person name="Wu J."/>
            <person name="Zhou S."/>
            <person name="Childs K.L."/>
            <person name="Davidson R.M."/>
            <person name="Lin H."/>
            <person name="Quesada-Ocampo L."/>
            <person name="Vaillancourt B."/>
            <person name="Sakai H."/>
            <person name="Lee S.S."/>
            <person name="Kim J."/>
            <person name="Numa H."/>
            <person name="Itoh T."/>
            <person name="Buell C.R."/>
            <person name="Matsumoto T."/>
        </authorList>
    </citation>
    <scope>GENOME REANNOTATION</scope>
    <source>
        <strain>cv. Nipponbare</strain>
    </source>
</reference>
<reference key="4">
    <citation type="journal article" date="2012" name="Plant J.">
        <title>Signal transduction by IRE1-mediated splicing of bZIP50 and other stress sensors in the endoplasmic reticulum stress response of rice.</title>
        <authorList>
            <person name="Hayashi S."/>
            <person name="Wakasa Y."/>
            <person name="Takahashi H."/>
            <person name="Kawakatsu T."/>
            <person name="Takaiwa F."/>
        </authorList>
    </citation>
    <scope>INDUCTION BY DITHIOTHREITOL</scope>
    <scope>GENE FAMILY</scope>
    <scope>NOMENCLATURE</scope>
</reference>
<reference key="5">
    <citation type="journal article" date="2013" name="J. Exp. Bot.">
        <title>Analysis of rice ER-resident J-proteins reveals diversity and functional differentiation of the ER-resident Hsp70 system in plants.</title>
        <authorList>
            <person name="Ohta M."/>
            <person name="Wakasa Y."/>
            <person name="Takahashi H."/>
            <person name="Hayashi S."/>
            <person name="Kudo K."/>
            <person name="Takaiwa F."/>
        </authorList>
    </citation>
    <scope>INTERACTION WITH ERDJ3A</scope>
    <scope>INDUCTION</scope>
</reference>
<dbReference type="EMBL" id="AP005499">
    <property type="protein sequence ID" value="BAD03698.1"/>
    <property type="molecule type" value="Genomic_DNA"/>
</dbReference>
<dbReference type="EMBL" id="AP008214">
    <property type="protein sequence ID" value="BAF23108.1"/>
    <property type="molecule type" value="Genomic_DNA"/>
</dbReference>
<dbReference type="EMBL" id="AP014964">
    <property type="protein sequence ID" value="BAT04227.1"/>
    <property type="status" value="ALT_INIT"/>
    <property type="molecule type" value="Genomic_DNA"/>
</dbReference>
<dbReference type="SMR" id="Q6Z058"/>
<dbReference type="FunCoup" id="Q6Z058">
    <property type="interactions" value="1930"/>
</dbReference>
<dbReference type="STRING" id="39947.Q6Z058"/>
<dbReference type="PaxDb" id="39947-Q6Z058"/>
<dbReference type="EnsemblPlants" id="Os08t0197700-01">
    <property type="protein sequence ID" value="Os08t0197700-01"/>
    <property type="gene ID" value="Os08g0197700"/>
</dbReference>
<dbReference type="Gramene" id="Os08t0197700-01">
    <property type="protein sequence ID" value="Os08t0197700-01"/>
    <property type="gene ID" value="Os08g0197700"/>
</dbReference>
<dbReference type="KEGG" id="dosa:Os08g0197700"/>
<dbReference type="eggNOG" id="KOG0100">
    <property type="taxonomic scope" value="Eukaryota"/>
</dbReference>
<dbReference type="HOGENOM" id="CLU_005965_7_2_1"/>
<dbReference type="InParanoid" id="Q6Z058"/>
<dbReference type="Proteomes" id="UP000000763">
    <property type="component" value="Chromosome 8"/>
</dbReference>
<dbReference type="Proteomes" id="UP000059680">
    <property type="component" value="Chromosome 8"/>
</dbReference>
<dbReference type="GO" id="GO:0005737">
    <property type="term" value="C:cytoplasm"/>
    <property type="evidence" value="ECO:0000318"/>
    <property type="project" value="GO_Central"/>
</dbReference>
<dbReference type="GO" id="GO:0034663">
    <property type="term" value="C:endoplasmic reticulum chaperone complex"/>
    <property type="evidence" value="ECO:0000318"/>
    <property type="project" value="GO_Central"/>
</dbReference>
<dbReference type="GO" id="GO:0005788">
    <property type="term" value="C:endoplasmic reticulum lumen"/>
    <property type="evidence" value="ECO:0000318"/>
    <property type="project" value="GO_Central"/>
</dbReference>
<dbReference type="GO" id="GO:0016020">
    <property type="term" value="C:membrane"/>
    <property type="evidence" value="ECO:0000318"/>
    <property type="project" value="GO_Central"/>
</dbReference>
<dbReference type="GO" id="GO:0005634">
    <property type="term" value="C:nucleus"/>
    <property type="evidence" value="ECO:0000318"/>
    <property type="project" value="GO_Central"/>
</dbReference>
<dbReference type="GO" id="GO:0005524">
    <property type="term" value="F:ATP binding"/>
    <property type="evidence" value="ECO:0007669"/>
    <property type="project" value="UniProtKB-KW"/>
</dbReference>
<dbReference type="GO" id="GO:0016887">
    <property type="term" value="F:ATP hydrolysis activity"/>
    <property type="evidence" value="ECO:0000318"/>
    <property type="project" value="GO_Central"/>
</dbReference>
<dbReference type="GO" id="GO:0140662">
    <property type="term" value="F:ATP-dependent protein folding chaperone"/>
    <property type="evidence" value="ECO:0007669"/>
    <property type="project" value="InterPro"/>
</dbReference>
<dbReference type="GO" id="GO:0031072">
    <property type="term" value="F:heat shock protein binding"/>
    <property type="evidence" value="ECO:0000318"/>
    <property type="project" value="GO_Central"/>
</dbReference>
<dbReference type="GO" id="GO:0044183">
    <property type="term" value="F:protein folding chaperone"/>
    <property type="evidence" value="ECO:0000318"/>
    <property type="project" value="GO_Central"/>
</dbReference>
<dbReference type="GO" id="GO:0051085">
    <property type="term" value="P:chaperone cofactor-dependent protein refolding"/>
    <property type="evidence" value="ECO:0000318"/>
    <property type="project" value="GO_Central"/>
</dbReference>
<dbReference type="GO" id="GO:0030968">
    <property type="term" value="P:endoplasmic reticulum unfolded protein response"/>
    <property type="evidence" value="ECO:0000318"/>
    <property type="project" value="GO_Central"/>
</dbReference>
<dbReference type="GO" id="GO:0036503">
    <property type="term" value="P:ERAD pathway"/>
    <property type="evidence" value="ECO:0000318"/>
    <property type="project" value="GO_Central"/>
</dbReference>
<dbReference type="GO" id="GO:0042026">
    <property type="term" value="P:protein refolding"/>
    <property type="evidence" value="ECO:0000318"/>
    <property type="project" value="GO_Central"/>
</dbReference>
<dbReference type="CDD" id="cd10241">
    <property type="entry name" value="ASKHA_NBD_HSP70_BiP"/>
    <property type="match status" value="1"/>
</dbReference>
<dbReference type="FunFam" id="3.30.420.40:FF:000020">
    <property type="entry name" value="Chaperone protein HscA homolog"/>
    <property type="match status" value="1"/>
</dbReference>
<dbReference type="FunFam" id="2.60.34.10:FF:000002">
    <property type="entry name" value="Heat shock 70 kDa"/>
    <property type="match status" value="1"/>
</dbReference>
<dbReference type="FunFam" id="3.90.640.10:FF:000002">
    <property type="entry name" value="Heat shock 70 kDa"/>
    <property type="match status" value="1"/>
</dbReference>
<dbReference type="FunFam" id="1.20.1270.10:FF:000040">
    <property type="entry name" value="Heat shock 70 kDa protein BIP5"/>
    <property type="match status" value="1"/>
</dbReference>
<dbReference type="FunFam" id="3.30.30.30:FF:000001">
    <property type="entry name" value="heat shock 70 kDa protein-like"/>
    <property type="match status" value="1"/>
</dbReference>
<dbReference type="FunFam" id="3.30.420.40:FF:000026">
    <property type="entry name" value="Heat shock protein 70"/>
    <property type="match status" value="1"/>
</dbReference>
<dbReference type="Gene3D" id="1.20.1270.10">
    <property type="match status" value="1"/>
</dbReference>
<dbReference type="Gene3D" id="3.30.420.40">
    <property type="match status" value="2"/>
</dbReference>
<dbReference type="Gene3D" id="3.90.640.10">
    <property type="entry name" value="Actin, Chain A, domain 4"/>
    <property type="match status" value="1"/>
</dbReference>
<dbReference type="Gene3D" id="2.60.34.10">
    <property type="entry name" value="Substrate Binding Domain Of DNAk, Chain A, domain 1"/>
    <property type="match status" value="1"/>
</dbReference>
<dbReference type="InterPro" id="IPR043129">
    <property type="entry name" value="ATPase_NBD"/>
</dbReference>
<dbReference type="InterPro" id="IPR042050">
    <property type="entry name" value="BIP_NBD"/>
</dbReference>
<dbReference type="InterPro" id="IPR018181">
    <property type="entry name" value="Heat_shock_70_CS"/>
</dbReference>
<dbReference type="InterPro" id="IPR029048">
    <property type="entry name" value="HSP70_C_sf"/>
</dbReference>
<dbReference type="InterPro" id="IPR029047">
    <property type="entry name" value="HSP70_peptide-bd_sf"/>
</dbReference>
<dbReference type="InterPro" id="IPR013126">
    <property type="entry name" value="Hsp_70_fam"/>
</dbReference>
<dbReference type="NCBIfam" id="NF001413">
    <property type="entry name" value="PRK00290.1"/>
    <property type="match status" value="1"/>
</dbReference>
<dbReference type="PANTHER" id="PTHR19375">
    <property type="entry name" value="HEAT SHOCK PROTEIN 70KDA"/>
    <property type="match status" value="1"/>
</dbReference>
<dbReference type="Pfam" id="PF00012">
    <property type="entry name" value="HSP70"/>
    <property type="match status" value="1"/>
</dbReference>
<dbReference type="PRINTS" id="PR00301">
    <property type="entry name" value="HEATSHOCK70"/>
</dbReference>
<dbReference type="SUPFAM" id="SSF53067">
    <property type="entry name" value="Actin-like ATPase domain"/>
    <property type="match status" value="2"/>
</dbReference>
<dbReference type="SUPFAM" id="SSF100934">
    <property type="entry name" value="Heat shock protein 70kD (HSP70), C-terminal subdomain"/>
    <property type="match status" value="1"/>
</dbReference>
<dbReference type="SUPFAM" id="SSF100920">
    <property type="entry name" value="Heat shock protein 70kD (HSP70), peptide-binding domain"/>
    <property type="match status" value="1"/>
</dbReference>
<dbReference type="PROSITE" id="PS00014">
    <property type="entry name" value="ER_TARGET"/>
    <property type="match status" value="1"/>
</dbReference>
<dbReference type="PROSITE" id="PS00297">
    <property type="entry name" value="HSP70_1"/>
    <property type="match status" value="1"/>
</dbReference>
<dbReference type="PROSITE" id="PS00329">
    <property type="entry name" value="HSP70_2"/>
    <property type="match status" value="1"/>
</dbReference>
<dbReference type="PROSITE" id="PS01036">
    <property type="entry name" value="HSP70_3"/>
    <property type="match status" value="1"/>
</dbReference>